<sequence>MNKSRFISCVILIFALILVLFTPNVLAESQPDPTPDELHKSSEFTGTMGNMKYLYDDHYVSATKVMSVDKFLAHDLIYNISDKKLKNYDKVKTELLNEDLAKKYKDEVVDVYGSNYYVNCYFSSKDNVGKVTGGKTCMYGGITKHEGNHFDNGNLQNVLIRVYENKRNTISFEVQTDKKSVTAQELDIKARNFLINKKNLYEFNSSPYETGYIKFIENNGNTFWYDMMPAPGDKFDQSKYLMMYNDNKTVDSKSVKIEVHLTTKNG</sequence>
<keyword id="KW-0002">3D-structure</keyword>
<keyword id="KW-0903">Direct protein sequencing</keyword>
<keyword id="KW-1015">Disulfide bond</keyword>
<keyword id="KW-0260">Enterotoxin</keyword>
<keyword id="KW-0479">Metal-binding</keyword>
<keyword id="KW-0964">Secreted</keyword>
<keyword id="KW-0732">Signal</keyword>
<keyword id="KW-0766">Superantigen</keyword>
<keyword id="KW-0800">Toxin</keyword>
<keyword id="KW-0843">Virulence</keyword>
<keyword id="KW-0862">Zinc</keyword>
<evidence type="ECO:0000269" key="1">
    <source>
    </source>
</evidence>
<evidence type="ECO:0000269" key="2">
    <source>
    </source>
</evidence>
<evidence type="ECO:0000269" key="3">
    <source>
    </source>
</evidence>
<evidence type="ECO:0000269" key="4">
    <source>
    </source>
</evidence>
<evidence type="ECO:0000269" key="5">
    <source>
    </source>
</evidence>
<evidence type="ECO:0000269" key="6">
    <source>
    </source>
</evidence>
<evidence type="ECO:0000305" key="7"/>
<evidence type="ECO:0007744" key="8">
    <source>
        <dbReference type="PDB" id="1CQV"/>
    </source>
</evidence>
<evidence type="ECO:0007744" key="9">
    <source>
        <dbReference type="PDB" id="1I4P"/>
    </source>
</evidence>
<evidence type="ECO:0007744" key="10">
    <source>
        <dbReference type="PDB" id="1I4Q"/>
    </source>
</evidence>
<evidence type="ECO:0007744" key="11">
    <source>
        <dbReference type="PDB" id="1I4R"/>
    </source>
</evidence>
<evidence type="ECO:0007744" key="12">
    <source>
        <dbReference type="PDB" id="1I4X"/>
    </source>
</evidence>
<evidence type="ECO:0007744" key="13">
    <source>
        <dbReference type="PDB" id="1SE2"/>
    </source>
</evidence>
<evidence type="ECO:0007744" key="14">
    <source>
        <dbReference type="PDB" id="1STE"/>
    </source>
</evidence>
<evidence type="ECO:0007744" key="15">
    <source>
        <dbReference type="PDB" id="1UNS"/>
    </source>
</evidence>
<evidence type="ECO:0007829" key="16">
    <source>
        <dbReference type="PDB" id="1I4P"/>
    </source>
</evidence>
<evidence type="ECO:0007829" key="17">
    <source>
        <dbReference type="PDB" id="1STE"/>
    </source>
</evidence>
<evidence type="ECO:0007829" key="18">
    <source>
        <dbReference type="PDB" id="1UNS"/>
    </source>
</evidence>
<gene>
    <name type="primary">entC2</name>
</gene>
<dbReference type="PIR" id="A60114">
    <property type="entry name" value="A60114"/>
</dbReference>
<dbReference type="PDB" id="1CQV">
    <property type="method" value="X-ray"/>
    <property type="resolution" value="2.06 A"/>
    <property type="chains" value="A=28-266"/>
</dbReference>
<dbReference type="PDB" id="1I4P">
    <property type="method" value="X-ray"/>
    <property type="resolution" value="2.00 A"/>
    <property type="chains" value="A=28-266"/>
</dbReference>
<dbReference type="PDB" id="1I4Q">
    <property type="method" value="X-ray"/>
    <property type="resolution" value="2.20 A"/>
    <property type="chains" value="A=28-266"/>
</dbReference>
<dbReference type="PDB" id="1I4R">
    <property type="method" value="X-ray"/>
    <property type="resolution" value="2.10 A"/>
    <property type="chains" value="A=28-266"/>
</dbReference>
<dbReference type="PDB" id="1I4X">
    <property type="method" value="X-ray"/>
    <property type="resolution" value="2.40 A"/>
    <property type="chains" value="A=28-266"/>
</dbReference>
<dbReference type="PDB" id="1SE2">
    <property type="method" value="X-ray"/>
    <property type="resolution" value="2.70 A"/>
    <property type="chains" value="A=28-266"/>
</dbReference>
<dbReference type="PDB" id="1STE">
    <property type="method" value="X-ray"/>
    <property type="resolution" value="2.00 A"/>
    <property type="chains" value="A=28-266"/>
</dbReference>
<dbReference type="PDB" id="1UNS">
    <property type="method" value="X-ray"/>
    <property type="resolution" value="2.00 A"/>
    <property type="chains" value="A=28-266"/>
</dbReference>
<dbReference type="PDBsum" id="1CQV"/>
<dbReference type="PDBsum" id="1I4P"/>
<dbReference type="PDBsum" id="1I4Q"/>
<dbReference type="PDBsum" id="1I4R"/>
<dbReference type="PDBsum" id="1I4X"/>
<dbReference type="PDBsum" id="1SE2"/>
<dbReference type="PDBsum" id="1STE"/>
<dbReference type="PDBsum" id="1UNS"/>
<dbReference type="SMR" id="P34071"/>
<dbReference type="Allergome" id="2141">
    <property type="allergen name" value="Sta a SEC"/>
</dbReference>
<dbReference type="EvolutionaryTrace" id="P34071"/>
<dbReference type="PRO" id="PR:P34071"/>
<dbReference type="GO" id="GO:0005576">
    <property type="term" value="C:extracellular region"/>
    <property type="evidence" value="ECO:0007669"/>
    <property type="project" value="UniProtKB-SubCell"/>
</dbReference>
<dbReference type="GO" id="GO:0046872">
    <property type="term" value="F:metal ion binding"/>
    <property type="evidence" value="ECO:0007669"/>
    <property type="project" value="UniProtKB-KW"/>
</dbReference>
<dbReference type="GO" id="GO:0090729">
    <property type="term" value="F:toxin activity"/>
    <property type="evidence" value="ECO:0007669"/>
    <property type="project" value="UniProtKB-KW"/>
</dbReference>
<dbReference type="Gene3D" id="2.40.50.110">
    <property type="match status" value="1"/>
</dbReference>
<dbReference type="Gene3D" id="3.10.20.120">
    <property type="match status" value="1"/>
</dbReference>
<dbReference type="InterPro" id="IPR008992">
    <property type="entry name" value="Enterotoxin"/>
</dbReference>
<dbReference type="InterPro" id="IPR006126">
    <property type="entry name" value="Staph/Strept_toxin_CS"/>
</dbReference>
<dbReference type="InterPro" id="IPR006173">
    <property type="entry name" value="Staph_tox_OB"/>
</dbReference>
<dbReference type="InterPro" id="IPR016091">
    <property type="entry name" value="SuperAg_toxin_C"/>
</dbReference>
<dbReference type="InterPro" id="IPR013307">
    <property type="entry name" value="Superantigen_bac"/>
</dbReference>
<dbReference type="InterPro" id="IPR006123">
    <property type="entry name" value="Toxin_b-grasp_Staph/Strep"/>
</dbReference>
<dbReference type="InterPro" id="IPR006177">
    <property type="entry name" value="Toxin_bac"/>
</dbReference>
<dbReference type="Pfam" id="PF02876">
    <property type="entry name" value="Stap_Strp_tox_C"/>
    <property type="match status" value="1"/>
</dbReference>
<dbReference type="Pfam" id="PF01123">
    <property type="entry name" value="Stap_Strp_toxin"/>
    <property type="match status" value="1"/>
</dbReference>
<dbReference type="PRINTS" id="PR00279">
    <property type="entry name" value="BACTRLTOXIN"/>
</dbReference>
<dbReference type="PRINTS" id="PR01898">
    <property type="entry name" value="SAGSUPRFAMLY"/>
</dbReference>
<dbReference type="SUPFAM" id="SSF50203">
    <property type="entry name" value="Bacterial enterotoxins"/>
    <property type="match status" value="1"/>
</dbReference>
<dbReference type="SUPFAM" id="SSF54334">
    <property type="entry name" value="Superantigen toxins, C-terminal domain"/>
    <property type="match status" value="1"/>
</dbReference>
<dbReference type="PROSITE" id="PS00277">
    <property type="entry name" value="STAPH_STREP_TOXIN_1"/>
    <property type="match status" value="1"/>
</dbReference>
<dbReference type="PROSITE" id="PS00278">
    <property type="entry name" value="STAPH_STREP_TOXIN_2"/>
    <property type="match status" value="1"/>
</dbReference>
<protein>
    <recommendedName>
        <fullName>Enterotoxin type C-2</fullName>
    </recommendedName>
    <alternativeName>
        <fullName>SEC2</fullName>
    </alternativeName>
</protein>
<feature type="signal peptide" evidence="5">
    <location>
        <begin position="1"/>
        <end position="27"/>
    </location>
</feature>
<feature type="chain" id="PRO_0000035608" description="Enterotoxin type C-2">
    <location>
        <begin position="28"/>
        <end position="266"/>
    </location>
</feature>
<feature type="binding site" evidence="1 2 6 8 9 10 11 14 15">
    <location>
        <position position="36"/>
    </location>
    <ligand>
        <name>Zn(2+)</name>
        <dbReference type="ChEBI" id="CHEBI:29105"/>
        <label>1</label>
        <note>ligand shared between two neighboring subunits</note>
    </ligand>
</feature>
<feature type="binding site" evidence="2 15">
    <location>
        <position position="74"/>
    </location>
    <ligand>
        <name>Zn(2+)</name>
        <dbReference type="ChEBI" id="CHEBI:29105"/>
        <label>2</label>
    </ligand>
</feature>
<feature type="binding site" evidence="2 15">
    <location>
        <position position="98"/>
    </location>
    <ligand>
        <name>Zn(2+)</name>
        <dbReference type="ChEBI" id="CHEBI:29105"/>
        <label>2</label>
    </ligand>
</feature>
<feature type="binding site" evidence="2 15">
    <location>
        <position position="107"/>
    </location>
    <ligand>
        <name>Zn(2+)</name>
        <dbReference type="ChEBI" id="CHEBI:29105"/>
        <label>2</label>
    </ligand>
</feature>
<feature type="binding site" description="in other chain" evidence="1 2 6 8 9 10 11 12 14 15">
    <location>
        <position position="110"/>
    </location>
    <ligand>
        <name>Zn(2+)</name>
        <dbReference type="ChEBI" id="CHEBI:29105"/>
        <label>1</label>
        <note>ligand shared between two neighboring subunits</note>
    </ligand>
</feature>
<feature type="binding site" description="in other chain" evidence="1 2 6 8 9 10 11 12 14 15">
    <location>
        <position position="145"/>
    </location>
    <ligand>
        <name>Zn(2+)</name>
        <dbReference type="ChEBI" id="CHEBI:29105"/>
        <label>1</label>
        <note>ligand shared between two neighboring subunits</note>
    </ligand>
</feature>
<feature type="binding site" evidence="2 15">
    <location>
        <position position="146"/>
    </location>
    <ligand>
        <name>Zn(2+)</name>
        <dbReference type="ChEBI" id="CHEBI:29105"/>
        <label>2</label>
    </ligand>
</feature>
<feature type="binding site" description="in other chain" evidence="1 2 6 8 9 10 11 12 14 15">
    <location>
        <position position="149"/>
    </location>
    <ligand>
        <name>Zn(2+)</name>
        <dbReference type="ChEBI" id="CHEBI:29105"/>
        <label>1</label>
        <note>ligand shared between two neighboring subunits</note>
    </ligand>
</feature>
<feature type="disulfide bond" evidence="2 6 8 9 10 11 12 13 14 15">
    <location>
        <begin position="120"/>
        <end position="137"/>
    </location>
</feature>
<feature type="mutagenesis site" description="About 30% loss of T-cell stimulation." evidence="3">
    <original>H</original>
    <variation>A</variation>
    <location>
        <position position="74"/>
    </location>
</feature>
<feature type="mutagenesis site" description="Complete loss of emetic activity." evidence="3">
    <original>H</original>
    <variation>A</variation>
    <location>
        <position position="145"/>
    </location>
</feature>
<feature type="mutagenesis site" description="Complete loss of emetic activity." evidence="3">
    <original>H</original>
    <variation>A</variation>
    <location>
        <position position="149"/>
    </location>
</feature>
<feature type="helix" evidence="16">
    <location>
        <begin position="35"/>
        <end position="37"/>
    </location>
</feature>
<feature type="helix" evidence="16">
    <location>
        <begin position="41"/>
        <end position="43"/>
    </location>
</feature>
<feature type="helix" evidence="16">
    <location>
        <begin position="49"/>
        <end position="52"/>
    </location>
</feature>
<feature type="turn" evidence="16">
    <location>
        <begin position="53"/>
        <end position="55"/>
    </location>
</feature>
<feature type="strand" evidence="16">
    <location>
        <begin position="60"/>
        <end position="65"/>
    </location>
</feature>
<feature type="strand" evidence="16">
    <location>
        <begin position="75"/>
        <end position="79"/>
    </location>
</feature>
<feature type="turn" evidence="16">
    <location>
        <begin position="83"/>
        <end position="85"/>
    </location>
</feature>
<feature type="strand" evidence="16">
    <location>
        <begin position="89"/>
        <end position="94"/>
    </location>
</feature>
<feature type="helix" evidence="16">
    <location>
        <begin position="98"/>
        <end position="104"/>
    </location>
</feature>
<feature type="strand" evidence="16">
    <location>
        <begin position="109"/>
        <end position="113"/>
    </location>
</feature>
<feature type="strand" evidence="18">
    <location>
        <begin position="127"/>
        <end position="133"/>
    </location>
</feature>
<feature type="strand" evidence="16">
    <location>
        <begin position="135"/>
        <end position="139"/>
    </location>
</feature>
<feature type="strand" evidence="16">
    <location>
        <begin position="142"/>
        <end position="145"/>
    </location>
</feature>
<feature type="helix" evidence="17">
    <location>
        <begin position="151"/>
        <end position="153"/>
    </location>
</feature>
<feature type="strand" evidence="16">
    <location>
        <begin position="156"/>
        <end position="166"/>
    </location>
</feature>
<feature type="strand" evidence="16">
    <location>
        <begin position="168"/>
        <end position="182"/>
    </location>
</feature>
<feature type="helix" evidence="16">
    <location>
        <begin position="183"/>
        <end position="198"/>
    </location>
</feature>
<feature type="strand" evidence="16">
    <location>
        <begin position="209"/>
        <end position="216"/>
    </location>
</feature>
<feature type="strand" evidence="16">
    <location>
        <begin position="222"/>
        <end position="226"/>
    </location>
</feature>
<feature type="strand" evidence="16">
    <location>
        <begin position="231"/>
        <end position="233"/>
    </location>
</feature>
<feature type="helix" evidence="16">
    <location>
        <begin position="237"/>
        <end position="241"/>
    </location>
</feature>
<feature type="helix" evidence="16">
    <location>
        <begin position="242"/>
        <end position="244"/>
    </location>
</feature>
<feature type="strand" evidence="16">
    <location>
        <begin position="249"/>
        <end position="251"/>
    </location>
</feature>
<feature type="turn" evidence="16">
    <location>
        <begin position="252"/>
        <end position="254"/>
    </location>
</feature>
<feature type="strand" evidence="16">
    <location>
        <begin position="256"/>
        <end position="262"/>
    </location>
</feature>
<organism>
    <name type="scientific">Staphylococcus aureus</name>
    <dbReference type="NCBI Taxonomy" id="1280"/>
    <lineage>
        <taxon>Bacteria</taxon>
        <taxon>Bacillati</taxon>
        <taxon>Bacillota</taxon>
        <taxon>Bacilli</taxon>
        <taxon>Bacillales</taxon>
        <taxon>Staphylococcaceae</taxon>
        <taxon>Staphylococcus</taxon>
    </lineage>
</organism>
<comment type="function">
    <text evidence="2 3 4">Staphylococcal enterotoxin that activates the host immune system by binding as unprocessed molecules to major histocompatibility (MHC) complex class II and T-cell receptor (TCR) molecules. In turn, this ternary complex activates a large number of T-lymphocytes initiating a systemic release of pro-inflammatory cytokines (PubMed:14559915, PubMed:19246739, PubMed:2210803). Also causes the intoxication staphylococcal food poisoning syndrome (PubMed:19246739).</text>
</comment>
<comment type="cofactor">
    <cofactor>
        <name>Zn(2+)</name>
        <dbReference type="ChEBI" id="CHEBI:29105"/>
    </cofactor>
    <text evidence="2">Possesses two zinc-binding sites. The zinc ion is necessary for the toxin interaction with MHC class II.</text>
</comment>
<comment type="subunit">
    <text evidence="4">Interacts with host MHC class II molecules composed of alpha/HLA-DRA and beta/HLA-DRB1 chains.</text>
</comment>
<comment type="subcellular location">
    <subcellularLocation>
        <location>Secreted</location>
    </subcellularLocation>
</comment>
<comment type="similarity">
    <text evidence="7">Belongs to the staphylococcal/streptococcal toxin family.</text>
</comment>
<proteinExistence type="evidence at protein level"/>
<accession>P34071</accession>
<name>ENTC2_STAAU</name>
<reference key="1">
    <citation type="journal article" date="1989" name="Infect. Immun.">
        <title>Conservation of the biologically active portions of staphylococcal enterotoxins C1 and C2.</title>
        <authorList>
            <person name="Bohach G.A."/>
            <person name="Schlievert P.M."/>
        </authorList>
    </citation>
    <scope>NUCLEOTIDE SEQUENCE [GENOMIC DNA]</scope>
    <scope>PROTEIN SEQUENCE OF 28-66</scope>
</reference>
<reference key="2">
    <citation type="journal article" date="1990" name="Immunology">
        <title>Targeting of human cytotoxic T lymphocytes to MHC class II-expressing cells by staphylococcal enterotoxins.</title>
        <authorList>
            <person name="Dohlsten M."/>
            <person name="Lando P.A."/>
            <person name="Hedlund G."/>
            <person name="Trowsdale J."/>
            <person name="Kalland T."/>
        </authorList>
    </citation>
    <scope>FUNCTION</scope>
    <scope>INTERACTION WITH HOST MHC II HLA-DRA AND HLA-DRB1</scope>
</reference>
<reference key="3">
    <citation type="journal article" date="2009" name="Microbiology">
        <title>Biological characterization of the zinc site coordinating histidine residues of staphylococcal enterotoxin C2.</title>
        <authorList>
            <person name="Wang X."/>
            <person name="Zhang H."/>
            <person name="Xu M."/>
            <person name="Cai Y."/>
            <person name="Liu C."/>
            <person name="Su Z."/>
            <person name="Zhang C."/>
        </authorList>
    </citation>
    <scope>FUNCTION</scope>
    <scope>MUTAGENESIS OF HIS-74; HIS-145 AND HIS-149</scope>
    <source>
        <strain>0165</strain>
    </source>
</reference>
<reference evidence="14" key="4">
    <citation type="journal article" date="1995" name="Structure">
        <title>Crystal structure of the superantigen enterotoxin C2 from Staphylococcus aureus reveals a zinc-binding site.</title>
        <authorList>
            <person name="Papageorgiou A.C."/>
            <person name="Acharya K.R."/>
            <person name="Shapiro R."/>
            <person name="Passalacqua E.F."/>
            <person name="Brehm R.D."/>
            <person name="Tranter H.S."/>
        </authorList>
    </citation>
    <scope>X-RAY CRYSTALLOGRAPHY (2.0 ANGSTROMS) IN COMPLEX WITH ZINC</scope>
</reference>
<reference key="5">
    <citation type="journal article" date="1995" name="Nat. Struct. Biol.">
        <title>Residues defining V beta specificity in staphylococcal enterotoxins.</title>
        <authorList>
            <person name="Swaminathan S."/>
            <person name="Furey W.F. Jr."/>
            <person name="Pletcher J."/>
            <person name="Sax M."/>
        </authorList>
    </citation>
    <scope>X-RAY CRYSTALLOGRAPHY (2.7 ANGSTROMS)</scope>
</reference>
<reference key="6">
    <citation type="journal article" date="1997" name="J. Mol. Biol.">
        <title>A structural and functional comparison of staphylococcal enterotoxins A and C2 reveals remarkable similarity and dissimilarity.</title>
        <authorList>
            <person name="Schad E.M."/>
            <person name="Papageorgiou A.C."/>
            <person name="Svensson L.A."/>
            <person name="Acharya K.R."/>
        </authorList>
    </citation>
    <scope>COMPARISON OF STRUCTURE OF SEA AND SEC2</scope>
</reference>
<reference evidence="8 9 10 11 12" key="7">
    <citation type="journal article" date="2001" name="Acta Crystallogr. D">
        <title>Structure of staphylococcal enterotoxin C2 at various pH levels.</title>
        <authorList>
            <person name="Kumaran D."/>
            <person name="Eswaramoorthy S."/>
            <person name="Furey W."/>
            <person name="Sax M."/>
            <person name="Swaminathan S."/>
        </authorList>
    </citation>
    <scope>X-RAY CRYSTALLOGRAPHY (2.00 ANGSTROMS) OF 28-266 IN COMPLEX WITH ZINC</scope>
    <scope>DISULFIDE BONDS</scope>
</reference>
<reference evidence="15" key="8">
    <citation type="journal article" date="2004" name="J. Biol. Chem.">
        <title>Identification of a secondary zinc-binding site in staphylococcal enterotoxin C2. Implications for superantigen recognition.</title>
        <authorList>
            <person name="Papageorgiou A.C."/>
            <person name="Baker M.D."/>
            <person name="McLeod J.D."/>
            <person name="Goda S.K."/>
            <person name="Manzotti C.N."/>
            <person name="Sansom D.M."/>
            <person name="Tranter H.S."/>
            <person name="Acharya K.R."/>
        </authorList>
    </citation>
    <scope>X-RAY CRYSTALLOGRAPHY (2.00 ANGSTROMS) OF 28-266 IN COMPLEX WITH ZINC</scope>
    <scope>DISULFIDE BONDS</scope>
    <scope>FUNCTION</scope>
</reference>